<organism>
    <name type="scientific">Shewanella denitrificans (strain OS217 / ATCC BAA-1090 / DSM 15013)</name>
    <dbReference type="NCBI Taxonomy" id="318161"/>
    <lineage>
        <taxon>Bacteria</taxon>
        <taxon>Pseudomonadati</taxon>
        <taxon>Pseudomonadota</taxon>
        <taxon>Gammaproteobacteria</taxon>
        <taxon>Alteromonadales</taxon>
        <taxon>Shewanellaceae</taxon>
        <taxon>Shewanella</taxon>
    </lineage>
</organism>
<sequence length="287" mass="30809">MKRVFLLIATNLAILLVASIVMSILGVNTSTMGGLLVFAAIFGFGGSFISLAISKWMAKKTMGCEVIVQPRDETERWLVDTVTRQAKQAGINMPEVAIYQSPEMNAFATGPSKNNALVAVSTGLLYGMTRDEIEGVLAHEVSHVANGDMVTLTLIQGVVNTFVIFAARVVAGIIDNFVSSNDEEGQGLGMFAYMGVVFVLDMLFGILASIIVAYFSRIREFKADEGAARLAGKDKMIAALERLRAGPESGAMPAQMSAFGINGKRSMADFMMSHPPLEKRIAALKNS</sequence>
<evidence type="ECO:0000255" key="1">
    <source>
        <dbReference type="HAMAP-Rule" id="MF_00188"/>
    </source>
</evidence>
<feature type="chain" id="PRO_1000020934" description="Protease HtpX">
    <location>
        <begin position="1"/>
        <end position="287"/>
    </location>
</feature>
<feature type="transmembrane region" description="Helical" evidence="1">
    <location>
        <begin position="4"/>
        <end position="24"/>
    </location>
</feature>
<feature type="transmembrane region" description="Helical" evidence="1">
    <location>
        <begin position="33"/>
        <end position="53"/>
    </location>
</feature>
<feature type="transmembrane region" description="Helical" evidence="1">
    <location>
        <begin position="154"/>
        <end position="174"/>
    </location>
</feature>
<feature type="transmembrane region" description="Helical" evidence="1">
    <location>
        <begin position="195"/>
        <end position="215"/>
    </location>
</feature>
<feature type="active site" evidence="1">
    <location>
        <position position="140"/>
    </location>
</feature>
<feature type="binding site" evidence="1">
    <location>
        <position position="139"/>
    </location>
    <ligand>
        <name>Zn(2+)</name>
        <dbReference type="ChEBI" id="CHEBI:29105"/>
        <note>catalytic</note>
    </ligand>
</feature>
<feature type="binding site" evidence="1">
    <location>
        <position position="143"/>
    </location>
    <ligand>
        <name>Zn(2+)</name>
        <dbReference type="ChEBI" id="CHEBI:29105"/>
        <note>catalytic</note>
    </ligand>
</feature>
<feature type="binding site" evidence="1">
    <location>
        <position position="220"/>
    </location>
    <ligand>
        <name>Zn(2+)</name>
        <dbReference type="ChEBI" id="CHEBI:29105"/>
        <note>catalytic</note>
    </ligand>
</feature>
<keyword id="KW-0997">Cell inner membrane</keyword>
<keyword id="KW-1003">Cell membrane</keyword>
<keyword id="KW-0378">Hydrolase</keyword>
<keyword id="KW-0472">Membrane</keyword>
<keyword id="KW-0479">Metal-binding</keyword>
<keyword id="KW-0482">Metalloprotease</keyword>
<keyword id="KW-0645">Protease</keyword>
<keyword id="KW-1185">Reference proteome</keyword>
<keyword id="KW-0812">Transmembrane</keyword>
<keyword id="KW-1133">Transmembrane helix</keyword>
<keyword id="KW-0862">Zinc</keyword>
<gene>
    <name evidence="1" type="primary">htpX</name>
    <name type="ordered locus">Sden_2130</name>
</gene>
<protein>
    <recommendedName>
        <fullName evidence="1">Protease HtpX</fullName>
        <ecNumber evidence="1">3.4.24.-</ecNumber>
    </recommendedName>
    <alternativeName>
        <fullName evidence="1">Heat shock protein HtpX</fullName>
    </alternativeName>
</protein>
<reference key="1">
    <citation type="submission" date="2006-03" db="EMBL/GenBank/DDBJ databases">
        <title>Complete sequence of Shewanella denitrificans OS217.</title>
        <authorList>
            <consortium name="US DOE Joint Genome Institute"/>
            <person name="Copeland A."/>
            <person name="Lucas S."/>
            <person name="Lapidus A."/>
            <person name="Barry K."/>
            <person name="Detter J.C."/>
            <person name="Glavina del Rio T."/>
            <person name="Hammon N."/>
            <person name="Israni S."/>
            <person name="Dalin E."/>
            <person name="Tice H."/>
            <person name="Pitluck S."/>
            <person name="Brettin T."/>
            <person name="Bruce D."/>
            <person name="Han C."/>
            <person name="Tapia R."/>
            <person name="Gilna P."/>
            <person name="Kiss H."/>
            <person name="Schmutz J."/>
            <person name="Larimer F."/>
            <person name="Land M."/>
            <person name="Hauser L."/>
            <person name="Kyrpides N."/>
            <person name="Lykidis A."/>
            <person name="Richardson P."/>
        </authorList>
    </citation>
    <scope>NUCLEOTIDE SEQUENCE [LARGE SCALE GENOMIC DNA]</scope>
    <source>
        <strain>OS217 / ATCC BAA-1090 / DSM 15013</strain>
    </source>
</reference>
<name>HTPX_SHEDO</name>
<accession>Q12MB4</accession>
<dbReference type="EC" id="3.4.24.-" evidence="1"/>
<dbReference type="EMBL" id="CP000302">
    <property type="protein sequence ID" value="ABE55412.1"/>
    <property type="molecule type" value="Genomic_DNA"/>
</dbReference>
<dbReference type="RefSeq" id="WP_011496567.1">
    <property type="nucleotide sequence ID" value="NC_007954.1"/>
</dbReference>
<dbReference type="STRING" id="318161.Sden_2130"/>
<dbReference type="MEROPS" id="M48.002"/>
<dbReference type="KEGG" id="sdn:Sden_2130"/>
<dbReference type="eggNOG" id="COG0501">
    <property type="taxonomic scope" value="Bacteria"/>
</dbReference>
<dbReference type="HOGENOM" id="CLU_042266_1_0_6"/>
<dbReference type="OrthoDB" id="15218at2"/>
<dbReference type="Proteomes" id="UP000001982">
    <property type="component" value="Chromosome"/>
</dbReference>
<dbReference type="GO" id="GO:0005886">
    <property type="term" value="C:plasma membrane"/>
    <property type="evidence" value="ECO:0007669"/>
    <property type="project" value="UniProtKB-SubCell"/>
</dbReference>
<dbReference type="GO" id="GO:0004222">
    <property type="term" value="F:metalloendopeptidase activity"/>
    <property type="evidence" value="ECO:0007669"/>
    <property type="project" value="UniProtKB-UniRule"/>
</dbReference>
<dbReference type="GO" id="GO:0008270">
    <property type="term" value="F:zinc ion binding"/>
    <property type="evidence" value="ECO:0007669"/>
    <property type="project" value="UniProtKB-UniRule"/>
</dbReference>
<dbReference type="GO" id="GO:0006508">
    <property type="term" value="P:proteolysis"/>
    <property type="evidence" value="ECO:0007669"/>
    <property type="project" value="UniProtKB-KW"/>
</dbReference>
<dbReference type="CDD" id="cd07335">
    <property type="entry name" value="M48B_HtpX_like"/>
    <property type="match status" value="1"/>
</dbReference>
<dbReference type="FunFam" id="3.30.2010.10:FF:000001">
    <property type="entry name" value="Protease HtpX"/>
    <property type="match status" value="1"/>
</dbReference>
<dbReference type="Gene3D" id="3.30.2010.10">
    <property type="entry name" value="Metalloproteases ('zincins'), catalytic domain"/>
    <property type="match status" value="1"/>
</dbReference>
<dbReference type="HAMAP" id="MF_00188">
    <property type="entry name" value="Pept_M48_protease_HtpX"/>
    <property type="match status" value="1"/>
</dbReference>
<dbReference type="InterPro" id="IPR050083">
    <property type="entry name" value="HtpX_protease"/>
</dbReference>
<dbReference type="InterPro" id="IPR022919">
    <property type="entry name" value="Pept_M48_protease_HtpX"/>
</dbReference>
<dbReference type="InterPro" id="IPR001915">
    <property type="entry name" value="Peptidase_M48"/>
</dbReference>
<dbReference type="NCBIfam" id="NF003965">
    <property type="entry name" value="PRK05457.1"/>
    <property type="match status" value="1"/>
</dbReference>
<dbReference type="PANTHER" id="PTHR43221">
    <property type="entry name" value="PROTEASE HTPX"/>
    <property type="match status" value="1"/>
</dbReference>
<dbReference type="PANTHER" id="PTHR43221:SF1">
    <property type="entry name" value="PROTEASE HTPX"/>
    <property type="match status" value="1"/>
</dbReference>
<dbReference type="Pfam" id="PF01435">
    <property type="entry name" value="Peptidase_M48"/>
    <property type="match status" value="1"/>
</dbReference>
<proteinExistence type="inferred from homology"/>
<comment type="cofactor">
    <cofactor evidence="1">
        <name>Zn(2+)</name>
        <dbReference type="ChEBI" id="CHEBI:29105"/>
    </cofactor>
    <text evidence="1">Binds 1 zinc ion per subunit.</text>
</comment>
<comment type="subcellular location">
    <subcellularLocation>
        <location evidence="1">Cell inner membrane</location>
        <topology evidence="1">Multi-pass membrane protein</topology>
    </subcellularLocation>
</comment>
<comment type="similarity">
    <text evidence="1">Belongs to the peptidase M48B family.</text>
</comment>